<feature type="chain" id="PRO_1000015955" description="Aspartyl/glutamyl-tRNA(Asn/Gln) amidotransferase subunit B">
    <location>
        <begin position="1"/>
        <end position="472"/>
    </location>
</feature>
<evidence type="ECO:0000255" key="1">
    <source>
        <dbReference type="HAMAP-Rule" id="MF_00121"/>
    </source>
</evidence>
<dbReference type="EC" id="6.3.5.-" evidence="1"/>
<dbReference type="EMBL" id="CP000538">
    <property type="protein sequence ID" value="EAQ72157.1"/>
    <property type="molecule type" value="Genomic_DNA"/>
</dbReference>
<dbReference type="RefSeq" id="WP_002856133.1">
    <property type="nucleotide sequence ID" value="NC_008787.1"/>
</dbReference>
<dbReference type="SMR" id="A1W0I1"/>
<dbReference type="KEGG" id="cjj:CJJ81176_1212"/>
<dbReference type="eggNOG" id="COG0064">
    <property type="taxonomic scope" value="Bacteria"/>
</dbReference>
<dbReference type="HOGENOM" id="CLU_019240_0_0_7"/>
<dbReference type="Proteomes" id="UP000000646">
    <property type="component" value="Chromosome"/>
</dbReference>
<dbReference type="GO" id="GO:0050566">
    <property type="term" value="F:asparaginyl-tRNA synthase (glutamine-hydrolyzing) activity"/>
    <property type="evidence" value="ECO:0007669"/>
    <property type="project" value="RHEA"/>
</dbReference>
<dbReference type="GO" id="GO:0005524">
    <property type="term" value="F:ATP binding"/>
    <property type="evidence" value="ECO:0007669"/>
    <property type="project" value="UniProtKB-KW"/>
</dbReference>
<dbReference type="GO" id="GO:0050567">
    <property type="term" value="F:glutaminyl-tRNA synthase (glutamine-hydrolyzing) activity"/>
    <property type="evidence" value="ECO:0007669"/>
    <property type="project" value="UniProtKB-UniRule"/>
</dbReference>
<dbReference type="GO" id="GO:0070681">
    <property type="term" value="P:glutaminyl-tRNAGln biosynthesis via transamidation"/>
    <property type="evidence" value="ECO:0007669"/>
    <property type="project" value="TreeGrafter"/>
</dbReference>
<dbReference type="GO" id="GO:0006412">
    <property type="term" value="P:translation"/>
    <property type="evidence" value="ECO:0007669"/>
    <property type="project" value="UniProtKB-UniRule"/>
</dbReference>
<dbReference type="FunFam" id="1.10.10.410:FF:000001">
    <property type="entry name" value="Aspartyl/glutamyl-tRNA(Asn/Gln) amidotransferase subunit B"/>
    <property type="match status" value="1"/>
</dbReference>
<dbReference type="FunFam" id="1.10.150.380:FF:000001">
    <property type="entry name" value="Aspartyl/glutamyl-tRNA(Asn/Gln) amidotransferase subunit B"/>
    <property type="match status" value="1"/>
</dbReference>
<dbReference type="Gene3D" id="1.10.10.410">
    <property type="match status" value="1"/>
</dbReference>
<dbReference type="Gene3D" id="1.10.150.380">
    <property type="entry name" value="GatB domain, N-terminal subdomain"/>
    <property type="match status" value="1"/>
</dbReference>
<dbReference type="HAMAP" id="MF_00121">
    <property type="entry name" value="GatB"/>
    <property type="match status" value="1"/>
</dbReference>
<dbReference type="InterPro" id="IPR017959">
    <property type="entry name" value="Asn/Gln-tRNA_amidoTrfase_suB/E"/>
</dbReference>
<dbReference type="InterPro" id="IPR006075">
    <property type="entry name" value="Asn/Gln-tRNA_Trfase_suB/E_cat"/>
</dbReference>
<dbReference type="InterPro" id="IPR018027">
    <property type="entry name" value="Asn/Gln_amidotransferase"/>
</dbReference>
<dbReference type="InterPro" id="IPR003789">
    <property type="entry name" value="Asn/Gln_tRNA_amidoTrase-B-like"/>
</dbReference>
<dbReference type="InterPro" id="IPR004413">
    <property type="entry name" value="GatB"/>
</dbReference>
<dbReference type="InterPro" id="IPR042114">
    <property type="entry name" value="GatB_C_1"/>
</dbReference>
<dbReference type="InterPro" id="IPR023168">
    <property type="entry name" value="GatB_Yqey_C_2"/>
</dbReference>
<dbReference type="InterPro" id="IPR017958">
    <property type="entry name" value="Gln-tRNA_amidoTrfase_suB_CS"/>
</dbReference>
<dbReference type="InterPro" id="IPR014746">
    <property type="entry name" value="Gln_synth/guanido_kin_cat_dom"/>
</dbReference>
<dbReference type="NCBIfam" id="TIGR00133">
    <property type="entry name" value="gatB"/>
    <property type="match status" value="1"/>
</dbReference>
<dbReference type="NCBIfam" id="NF004012">
    <property type="entry name" value="PRK05477.1-2"/>
    <property type="match status" value="1"/>
</dbReference>
<dbReference type="NCBIfam" id="NF004014">
    <property type="entry name" value="PRK05477.1-4"/>
    <property type="match status" value="1"/>
</dbReference>
<dbReference type="PANTHER" id="PTHR11659">
    <property type="entry name" value="GLUTAMYL-TRNA GLN AMIDOTRANSFERASE SUBUNIT B MITOCHONDRIAL AND PROKARYOTIC PET112-RELATED"/>
    <property type="match status" value="1"/>
</dbReference>
<dbReference type="PANTHER" id="PTHR11659:SF0">
    <property type="entry name" value="GLUTAMYL-TRNA(GLN) AMIDOTRANSFERASE SUBUNIT B, MITOCHONDRIAL"/>
    <property type="match status" value="1"/>
</dbReference>
<dbReference type="Pfam" id="PF02934">
    <property type="entry name" value="GatB_N"/>
    <property type="match status" value="1"/>
</dbReference>
<dbReference type="Pfam" id="PF02637">
    <property type="entry name" value="GatB_Yqey"/>
    <property type="match status" value="1"/>
</dbReference>
<dbReference type="SMART" id="SM00845">
    <property type="entry name" value="GatB_Yqey"/>
    <property type="match status" value="1"/>
</dbReference>
<dbReference type="SUPFAM" id="SSF89095">
    <property type="entry name" value="GatB/YqeY motif"/>
    <property type="match status" value="1"/>
</dbReference>
<dbReference type="SUPFAM" id="SSF55931">
    <property type="entry name" value="Glutamine synthetase/guanido kinase"/>
    <property type="match status" value="1"/>
</dbReference>
<dbReference type="PROSITE" id="PS01234">
    <property type="entry name" value="GATB"/>
    <property type="match status" value="1"/>
</dbReference>
<gene>
    <name evidence="1" type="primary">gatB</name>
    <name type="ordered locus">CJJ81176_1212</name>
</gene>
<keyword id="KW-0067">ATP-binding</keyword>
<keyword id="KW-0436">Ligase</keyword>
<keyword id="KW-0547">Nucleotide-binding</keyword>
<keyword id="KW-0648">Protein biosynthesis</keyword>
<sequence>MFEVVIGLEVHTQLNTKTKIFCSCATSFGEAPNTNVCPTCLALPGALPVLNEEAVKKAIAFGKAVNAAINKKSVFNRKNYFYPDLPKAYQISQFDIPIVEKGELFINVKGENKRIGITRAHLEEDAGKNIHENNFSKVDLNRAGTPLLEIVSEPELRSSDEAVAYLKKLHSIIRFLDISDANMQEGSFRCDANVSIRPKGDTKLYTRVEIKNLNSFRFIQKAIEYEVKRQSEAWEDGTYEQEVVQETRLFDTTNLVTRSMRGKEEAAEYRYFPDPDLLPVLLKDEFLDIKIPELPDEKKARFIDELGIKESDAEVLISSLEMSRFFESLISQNLNPKLCVNWLNTELMGLLKGELTIENSPVDAQKLGVLIKRIEDGTISAKAAKDVLAFVFENTSVEIDEAIEKLGLKQVSDDSAIEAVIEQILNANANKVAEYKSGKDKLFGFFVGQTMKEGKGAFNPAKVNEILKTKLG</sequence>
<proteinExistence type="inferred from homology"/>
<organism>
    <name type="scientific">Campylobacter jejuni subsp. jejuni serotype O:23/36 (strain 81-176)</name>
    <dbReference type="NCBI Taxonomy" id="354242"/>
    <lineage>
        <taxon>Bacteria</taxon>
        <taxon>Pseudomonadati</taxon>
        <taxon>Campylobacterota</taxon>
        <taxon>Epsilonproteobacteria</taxon>
        <taxon>Campylobacterales</taxon>
        <taxon>Campylobacteraceae</taxon>
        <taxon>Campylobacter</taxon>
    </lineage>
</organism>
<name>GATB_CAMJJ</name>
<reference key="1">
    <citation type="submission" date="2006-12" db="EMBL/GenBank/DDBJ databases">
        <authorList>
            <person name="Fouts D.E."/>
            <person name="Nelson K.E."/>
            <person name="Sebastian Y."/>
        </authorList>
    </citation>
    <scope>NUCLEOTIDE SEQUENCE [LARGE SCALE GENOMIC DNA]</scope>
    <source>
        <strain>81-176</strain>
    </source>
</reference>
<accession>A1W0I1</accession>
<protein>
    <recommendedName>
        <fullName evidence="1">Aspartyl/glutamyl-tRNA(Asn/Gln) amidotransferase subunit B</fullName>
        <shortName evidence="1">Asp/Glu-ADT subunit B</shortName>
        <ecNumber evidence="1">6.3.5.-</ecNumber>
    </recommendedName>
</protein>
<comment type="function">
    <text evidence="1">Allows the formation of correctly charged Asn-tRNA(Asn) or Gln-tRNA(Gln) through the transamidation of misacylated Asp-tRNA(Asn) or Glu-tRNA(Gln) in organisms which lack either or both of asparaginyl-tRNA or glutaminyl-tRNA synthetases. The reaction takes place in the presence of glutamine and ATP through an activated phospho-Asp-tRNA(Asn) or phospho-Glu-tRNA(Gln).</text>
</comment>
<comment type="catalytic activity">
    <reaction evidence="1">
        <text>L-glutamyl-tRNA(Gln) + L-glutamine + ATP + H2O = L-glutaminyl-tRNA(Gln) + L-glutamate + ADP + phosphate + H(+)</text>
        <dbReference type="Rhea" id="RHEA:17521"/>
        <dbReference type="Rhea" id="RHEA-COMP:9681"/>
        <dbReference type="Rhea" id="RHEA-COMP:9684"/>
        <dbReference type="ChEBI" id="CHEBI:15377"/>
        <dbReference type="ChEBI" id="CHEBI:15378"/>
        <dbReference type="ChEBI" id="CHEBI:29985"/>
        <dbReference type="ChEBI" id="CHEBI:30616"/>
        <dbReference type="ChEBI" id="CHEBI:43474"/>
        <dbReference type="ChEBI" id="CHEBI:58359"/>
        <dbReference type="ChEBI" id="CHEBI:78520"/>
        <dbReference type="ChEBI" id="CHEBI:78521"/>
        <dbReference type="ChEBI" id="CHEBI:456216"/>
    </reaction>
</comment>
<comment type="catalytic activity">
    <reaction evidence="1">
        <text>L-aspartyl-tRNA(Asn) + L-glutamine + ATP + H2O = L-asparaginyl-tRNA(Asn) + L-glutamate + ADP + phosphate + 2 H(+)</text>
        <dbReference type="Rhea" id="RHEA:14513"/>
        <dbReference type="Rhea" id="RHEA-COMP:9674"/>
        <dbReference type="Rhea" id="RHEA-COMP:9677"/>
        <dbReference type="ChEBI" id="CHEBI:15377"/>
        <dbReference type="ChEBI" id="CHEBI:15378"/>
        <dbReference type="ChEBI" id="CHEBI:29985"/>
        <dbReference type="ChEBI" id="CHEBI:30616"/>
        <dbReference type="ChEBI" id="CHEBI:43474"/>
        <dbReference type="ChEBI" id="CHEBI:58359"/>
        <dbReference type="ChEBI" id="CHEBI:78515"/>
        <dbReference type="ChEBI" id="CHEBI:78516"/>
        <dbReference type="ChEBI" id="CHEBI:456216"/>
    </reaction>
</comment>
<comment type="subunit">
    <text evidence="1">Heterotrimer of A, B and C subunits.</text>
</comment>
<comment type="similarity">
    <text evidence="1">Belongs to the GatB/GatE family. GatB subfamily.</text>
</comment>